<gene>
    <name evidence="1" type="primary">pyrE</name>
    <name type="ordered locus">PC1_4105</name>
</gene>
<keyword id="KW-0328">Glycosyltransferase</keyword>
<keyword id="KW-0460">Magnesium</keyword>
<keyword id="KW-0665">Pyrimidine biosynthesis</keyword>
<keyword id="KW-0808">Transferase</keyword>
<dbReference type="EC" id="2.4.2.10" evidence="1"/>
<dbReference type="EMBL" id="CP001657">
    <property type="protein sequence ID" value="ACT15120.1"/>
    <property type="molecule type" value="Genomic_DNA"/>
</dbReference>
<dbReference type="RefSeq" id="WP_015842194.1">
    <property type="nucleotide sequence ID" value="NC_012917.1"/>
</dbReference>
<dbReference type="SMR" id="C6DIC6"/>
<dbReference type="STRING" id="561230.PC1_4105"/>
<dbReference type="GeneID" id="67796092"/>
<dbReference type="KEGG" id="pct:PC1_4105"/>
<dbReference type="eggNOG" id="COG0461">
    <property type="taxonomic scope" value="Bacteria"/>
</dbReference>
<dbReference type="HOGENOM" id="CLU_074878_0_1_6"/>
<dbReference type="OrthoDB" id="9779060at2"/>
<dbReference type="UniPathway" id="UPA00070">
    <property type="reaction ID" value="UER00119"/>
</dbReference>
<dbReference type="Proteomes" id="UP000002736">
    <property type="component" value="Chromosome"/>
</dbReference>
<dbReference type="GO" id="GO:0005737">
    <property type="term" value="C:cytoplasm"/>
    <property type="evidence" value="ECO:0007669"/>
    <property type="project" value="TreeGrafter"/>
</dbReference>
<dbReference type="GO" id="GO:0000287">
    <property type="term" value="F:magnesium ion binding"/>
    <property type="evidence" value="ECO:0007669"/>
    <property type="project" value="UniProtKB-UniRule"/>
</dbReference>
<dbReference type="GO" id="GO:0004588">
    <property type="term" value="F:orotate phosphoribosyltransferase activity"/>
    <property type="evidence" value="ECO:0007669"/>
    <property type="project" value="UniProtKB-UniRule"/>
</dbReference>
<dbReference type="GO" id="GO:0006207">
    <property type="term" value="P:'de novo' pyrimidine nucleobase biosynthetic process"/>
    <property type="evidence" value="ECO:0007669"/>
    <property type="project" value="TreeGrafter"/>
</dbReference>
<dbReference type="GO" id="GO:0044205">
    <property type="term" value="P:'de novo' UMP biosynthetic process"/>
    <property type="evidence" value="ECO:0007669"/>
    <property type="project" value="UniProtKB-UniRule"/>
</dbReference>
<dbReference type="GO" id="GO:0046132">
    <property type="term" value="P:pyrimidine ribonucleoside biosynthetic process"/>
    <property type="evidence" value="ECO:0007669"/>
    <property type="project" value="TreeGrafter"/>
</dbReference>
<dbReference type="CDD" id="cd06223">
    <property type="entry name" value="PRTases_typeI"/>
    <property type="match status" value="1"/>
</dbReference>
<dbReference type="FunFam" id="3.40.50.2020:FF:000008">
    <property type="entry name" value="Orotate phosphoribosyltransferase"/>
    <property type="match status" value="1"/>
</dbReference>
<dbReference type="Gene3D" id="3.40.50.2020">
    <property type="match status" value="1"/>
</dbReference>
<dbReference type="HAMAP" id="MF_01208">
    <property type="entry name" value="PyrE"/>
    <property type="match status" value="1"/>
</dbReference>
<dbReference type="InterPro" id="IPR023031">
    <property type="entry name" value="OPRT"/>
</dbReference>
<dbReference type="InterPro" id="IPR004467">
    <property type="entry name" value="Or_phspho_trans_dom"/>
</dbReference>
<dbReference type="InterPro" id="IPR000836">
    <property type="entry name" value="PRibTrfase_dom"/>
</dbReference>
<dbReference type="InterPro" id="IPR029057">
    <property type="entry name" value="PRTase-like"/>
</dbReference>
<dbReference type="NCBIfam" id="TIGR00336">
    <property type="entry name" value="pyrE"/>
    <property type="match status" value="1"/>
</dbReference>
<dbReference type="PANTHER" id="PTHR46683">
    <property type="entry name" value="OROTATE PHOSPHORIBOSYLTRANSFERASE 1-RELATED"/>
    <property type="match status" value="1"/>
</dbReference>
<dbReference type="PANTHER" id="PTHR46683:SF1">
    <property type="entry name" value="OROTATE PHOSPHORIBOSYLTRANSFERASE 1-RELATED"/>
    <property type="match status" value="1"/>
</dbReference>
<dbReference type="Pfam" id="PF00156">
    <property type="entry name" value="Pribosyltran"/>
    <property type="match status" value="1"/>
</dbReference>
<dbReference type="SUPFAM" id="SSF53271">
    <property type="entry name" value="PRTase-like"/>
    <property type="match status" value="1"/>
</dbReference>
<dbReference type="PROSITE" id="PS00103">
    <property type="entry name" value="PUR_PYR_PR_TRANSFER"/>
    <property type="match status" value="1"/>
</dbReference>
<comment type="function">
    <text evidence="1">Catalyzes the transfer of a ribosyl phosphate group from 5-phosphoribose 1-diphosphate to orotate, leading to the formation of orotidine monophosphate (OMP).</text>
</comment>
<comment type="catalytic activity">
    <reaction evidence="1">
        <text>orotidine 5'-phosphate + diphosphate = orotate + 5-phospho-alpha-D-ribose 1-diphosphate</text>
        <dbReference type="Rhea" id="RHEA:10380"/>
        <dbReference type="ChEBI" id="CHEBI:30839"/>
        <dbReference type="ChEBI" id="CHEBI:33019"/>
        <dbReference type="ChEBI" id="CHEBI:57538"/>
        <dbReference type="ChEBI" id="CHEBI:58017"/>
        <dbReference type="EC" id="2.4.2.10"/>
    </reaction>
</comment>
<comment type="cofactor">
    <cofactor evidence="1">
        <name>Mg(2+)</name>
        <dbReference type="ChEBI" id="CHEBI:18420"/>
    </cofactor>
</comment>
<comment type="pathway">
    <text evidence="1">Pyrimidine metabolism; UMP biosynthesis via de novo pathway; UMP from orotate: step 1/2.</text>
</comment>
<comment type="subunit">
    <text evidence="1">Homodimer.</text>
</comment>
<comment type="similarity">
    <text evidence="1">Belongs to the purine/pyrimidine phosphoribosyltransferase family. PyrE subfamily.</text>
</comment>
<name>PYRE_PECCP</name>
<protein>
    <recommendedName>
        <fullName evidence="1">Orotate phosphoribosyltransferase</fullName>
        <shortName evidence="1">OPRT</shortName>
        <shortName evidence="1">OPRTase</shortName>
        <ecNumber evidence="1">2.4.2.10</ecNumber>
    </recommendedName>
</protein>
<reference key="1">
    <citation type="submission" date="2009-07" db="EMBL/GenBank/DDBJ databases">
        <title>Complete sequence of Pectobacterium carotovorum subsp. carotovorum PC1.</title>
        <authorList>
            <consortium name="US DOE Joint Genome Institute"/>
            <person name="Lucas S."/>
            <person name="Copeland A."/>
            <person name="Lapidus A."/>
            <person name="Glavina del Rio T."/>
            <person name="Tice H."/>
            <person name="Bruce D."/>
            <person name="Goodwin L."/>
            <person name="Pitluck S."/>
            <person name="Munk A.C."/>
            <person name="Brettin T."/>
            <person name="Detter J.C."/>
            <person name="Han C."/>
            <person name="Tapia R."/>
            <person name="Larimer F."/>
            <person name="Land M."/>
            <person name="Hauser L."/>
            <person name="Kyrpides N."/>
            <person name="Mikhailova N."/>
            <person name="Balakrishnan V."/>
            <person name="Glasner J."/>
            <person name="Perna N.T."/>
        </authorList>
    </citation>
    <scope>NUCLEOTIDE SEQUENCE [LARGE SCALE GENOMIC DNA]</scope>
    <source>
        <strain>PC1</strain>
    </source>
</reference>
<evidence type="ECO:0000255" key="1">
    <source>
        <dbReference type="HAMAP-Rule" id="MF_01208"/>
    </source>
</evidence>
<organism>
    <name type="scientific">Pectobacterium carotovorum subsp. carotovorum (strain PC1)</name>
    <dbReference type="NCBI Taxonomy" id="561230"/>
    <lineage>
        <taxon>Bacteria</taxon>
        <taxon>Pseudomonadati</taxon>
        <taxon>Pseudomonadota</taxon>
        <taxon>Gammaproteobacteria</taxon>
        <taxon>Enterobacterales</taxon>
        <taxon>Pectobacteriaceae</taxon>
        <taxon>Pectobacterium</taxon>
    </lineage>
</organism>
<accession>C6DIC6</accession>
<proteinExistence type="inferred from homology"/>
<feature type="chain" id="PRO_1000213862" description="Orotate phosphoribosyltransferase">
    <location>
        <begin position="1"/>
        <end position="213"/>
    </location>
</feature>
<feature type="binding site" description="in other chain" evidence="1">
    <location>
        <position position="26"/>
    </location>
    <ligand>
        <name>5-phospho-alpha-D-ribose 1-diphosphate</name>
        <dbReference type="ChEBI" id="CHEBI:58017"/>
        <note>ligand shared between dimeric partners</note>
    </ligand>
</feature>
<feature type="binding site" evidence="1">
    <location>
        <begin position="34"/>
        <end position="35"/>
    </location>
    <ligand>
        <name>orotate</name>
        <dbReference type="ChEBI" id="CHEBI:30839"/>
    </ligand>
</feature>
<feature type="binding site" description="in other chain" evidence="1">
    <location>
        <begin position="72"/>
        <end position="73"/>
    </location>
    <ligand>
        <name>5-phospho-alpha-D-ribose 1-diphosphate</name>
        <dbReference type="ChEBI" id="CHEBI:58017"/>
        <note>ligand shared between dimeric partners</note>
    </ligand>
</feature>
<feature type="binding site" evidence="1">
    <location>
        <position position="99"/>
    </location>
    <ligand>
        <name>5-phospho-alpha-D-ribose 1-diphosphate</name>
        <dbReference type="ChEBI" id="CHEBI:58017"/>
        <note>ligand shared between dimeric partners</note>
    </ligand>
</feature>
<feature type="binding site" description="in other chain" evidence="1">
    <location>
        <position position="100"/>
    </location>
    <ligand>
        <name>5-phospho-alpha-D-ribose 1-diphosphate</name>
        <dbReference type="ChEBI" id="CHEBI:58017"/>
        <note>ligand shared between dimeric partners</note>
    </ligand>
</feature>
<feature type="binding site" evidence="1">
    <location>
        <position position="103"/>
    </location>
    <ligand>
        <name>5-phospho-alpha-D-ribose 1-diphosphate</name>
        <dbReference type="ChEBI" id="CHEBI:58017"/>
        <note>ligand shared between dimeric partners</note>
    </ligand>
</feature>
<feature type="binding site" evidence="1">
    <location>
        <position position="105"/>
    </location>
    <ligand>
        <name>5-phospho-alpha-D-ribose 1-diphosphate</name>
        <dbReference type="ChEBI" id="CHEBI:58017"/>
        <note>ligand shared between dimeric partners</note>
    </ligand>
</feature>
<feature type="binding site" description="in other chain" evidence="1">
    <location>
        <begin position="124"/>
        <end position="132"/>
    </location>
    <ligand>
        <name>5-phospho-alpha-D-ribose 1-diphosphate</name>
        <dbReference type="ChEBI" id="CHEBI:58017"/>
        <note>ligand shared between dimeric partners</note>
    </ligand>
</feature>
<feature type="binding site" evidence="1">
    <location>
        <position position="128"/>
    </location>
    <ligand>
        <name>orotate</name>
        <dbReference type="ChEBI" id="CHEBI:30839"/>
    </ligand>
</feature>
<feature type="binding site" evidence="1">
    <location>
        <position position="156"/>
    </location>
    <ligand>
        <name>orotate</name>
        <dbReference type="ChEBI" id="CHEBI:30839"/>
    </ligand>
</feature>
<sequence length="213" mass="23405">MKAYQRQFIEFALSKQVLKFGEFTLKSGRISPYFFNAGLFNTGRDLALLGRFYAEALVDSGVEFDLLFGPAYKGIPIATTAAVALAEHHDRDLPYCFNRKEAKDHGEGGSLVGSPLQGRVMLVDDVITAGTAIRESMAIISAHGATLAGVMIALDRQERGRADLSAIQEVERDYQCKVISIITLKELIAYLAEKPEMAAHLDAVKAYREQFGV</sequence>